<accession>Q9Y210</accession>
<accession>Q52M59</accession>
<accession>Q9HCW3</accession>
<accession>Q9NQA8</accession>
<accession>Q9NQA9</accession>
<protein>
    <recommendedName>
        <fullName>Short transient receptor potential channel 6</fullName>
        <shortName evidence="21">TrpC6</shortName>
    </recommendedName>
    <alternativeName>
        <fullName>Transient receptor protein 6</fullName>
        <shortName>TRP-6</shortName>
    </alternativeName>
</protein>
<reference key="1">
    <citation type="journal article" date="1999" name="Nature">
        <title>Direct activation of human TRPC6 and TRPC3 channels by diacylglycerol.</title>
        <authorList>
            <person name="Hofmann T."/>
            <person name="Obukhov A.G."/>
            <person name="Schaefer M."/>
            <person name="Harteneck C."/>
            <person name="Gudermann T."/>
            <person name="Schultz G."/>
        </authorList>
    </citation>
    <scope>NUCLEOTIDE SEQUENCE [MRNA] (ISOFORM 1)</scope>
    <scope>FUNCTION</scope>
    <scope>TRANSPORTER ACTIVITY</scope>
    <scope>ACTIVITY REGULATION</scope>
    <source>
        <tissue>Placenta</tissue>
        <tissue>Testis</tissue>
    </source>
</reference>
<reference key="2">
    <citation type="journal article" date="1998" name="Cytogenet. Cell Genet.">
        <title>Identification and assignment of the human transient receptor potential channel 6 gene TRPC6 to chromosome 11q21-22.</title>
        <authorList>
            <person name="D'Esposito M."/>
            <person name="Strazzullo M."/>
            <person name="Cuccurese M."/>
            <person name="Spalluto C."/>
            <person name="Rocchi M."/>
            <person name="D'Urso M."/>
            <person name="Ciccodicola A."/>
        </authorList>
    </citation>
    <scope>NUCLEOTIDE SEQUENCE [MRNA] (ISOFORM 1)</scope>
    <source>
        <tissue>Teratocarcinoma</tissue>
    </source>
</reference>
<reference key="3">
    <citation type="journal article" date="2000" name="J. Biol. Chem.">
        <title>TRP4 (CCE1) protein is part of native calcium release-activated Ca2+-like channels in adrenal cells.</title>
        <authorList>
            <person name="Philipp S."/>
            <person name="Trost C."/>
            <person name="Warnat J."/>
            <person name="Rautmann J."/>
            <person name="Himmerkus N."/>
            <person name="Schroth G."/>
            <person name="Kretz O."/>
            <person name="Nastainczyk W."/>
            <person name="Cavalie A."/>
            <person name="Hoth M."/>
            <person name="Flockerzi V."/>
        </authorList>
    </citation>
    <scope>NUCLEOTIDE SEQUENCE [MRNA] (ISOFORMS 1; 2 AND 3)</scope>
    <source>
        <tissue>Placenta</tissue>
    </source>
</reference>
<reference key="4">
    <citation type="journal article" date="2004" name="Genome Res.">
        <title>The status, quality, and expansion of the NIH full-length cDNA project: the Mammalian Gene Collection (MGC).</title>
        <authorList>
            <consortium name="The MGC Project Team"/>
        </authorList>
    </citation>
    <scope>NUCLEOTIDE SEQUENCE [LARGE SCALE MRNA] (ISOFORM 1)</scope>
</reference>
<reference key="5">
    <citation type="submission" date="2000-09" db="EMBL/GenBank/DDBJ databases">
        <title>The capacitative calcium entry cation channel Trp6 is expressed in the muscularis externa of the guinea pig ileum and in a human jejunum smooth muscle cell line.</title>
        <authorList>
            <person name="Fenech C.J."/>
            <person name="Prestwich S.A."/>
            <person name="Zholos A.V."/>
            <person name="Bolton T.B."/>
        </authorList>
    </citation>
    <scope>NUCLEOTIDE SEQUENCE [MRNA] OF 487-643</scope>
</reference>
<reference key="6">
    <citation type="journal article" date="2003" name="J. Biol. Chem.">
        <title>N-linked protein glycosylation is a major determinant for basal TRPC3 and TRPC6 channel activity.</title>
        <authorList>
            <person name="Dietrich A."/>
            <person name="Mederos y Schnitzler M."/>
            <person name="Emmel J."/>
            <person name="Kalwa H."/>
            <person name="Hofmann T."/>
            <person name="Gudermann T."/>
        </authorList>
    </citation>
    <scope>GLYCOSYLATION AT ASN-473 AND ASN-561</scope>
    <scope>MUTAGENESIS OF ASN-561</scope>
</reference>
<reference key="7">
    <citation type="journal article" date="2005" name="J. Biol. Chem.">
        <title>MxA, a member of the dynamin superfamily, interacts with the ankyrin-like repeat domain of TRPC.</title>
        <authorList>
            <person name="Lussier M.P."/>
            <person name="Cayouette S."/>
            <person name="Lepage P.K."/>
            <person name="Bernier C.L."/>
            <person name="Francoeur N."/>
            <person name="St-Hilaire M."/>
            <person name="Pinard M."/>
            <person name="Boulay G."/>
        </authorList>
    </citation>
    <scope>INTERACTION WITH MX1</scope>
</reference>
<reference key="8">
    <citation type="journal article" date="2008" name="Cell Calcium">
        <title>RNF24, a new TRPC interacting protein, causes the intracellular retention of TRPC.</title>
        <authorList>
            <person name="Lussier M.P."/>
            <person name="Lepage P.K."/>
            <person name="Bousquet S.M."/>
            <person name="Boulay G."/>
        </authorList>
    </citation>
    <scope>INTERACTION WITH RNF24</scope>
    <scope>MUTAGENESIS OF ASN-125; ASN-127; CYS-128 AND ASP-130</scope>
</reference>
<reference key="9">
    <citation type="journal article" date="2008" name="J. Proteome Res.">
        <title>Phosphoproteome of resting human platelets.</title>
        <authorList>
            <person name="Zahedi R.P."/>
            <person name="Lewandrowski U."/>
            <person name="Wiesner J."/>
            <person name="Wortelkamp S."/>
            <person name="Moebius J."/>
            <person name="Schuetz C."/>
            <person name="Walter U."/>
            <person name="Gambaryan S."/>
            <person name="Sickmann A."/>
        </authorList>
    </citation>
    <scope>PHOSPHORYLATION [LARGE SCALE ANALYSIS] AT SER-815</scope>
    <scope>IDENTIFICATION BY MASS SPECTROMETRY [LARGE SCALE ANALYSIS]</scope>
    <source>
        <tissue>Platelet</tissue>
    </source>
</reference>
<reference key="10">
    <citation type="journal article" date="2005" name="Nat. Genet.">
        <title>TRPC6 is a glomerular slit diaphragm-associated channel required for normal renal function.</title>
        <authorList>
            <person name="Reiser J."/>
            <person name="Polu K.R."/>
            <person name="Moller C.C."/>
            <person name="Kenlan P."/>
            <person name="Altintas M.M."/>
            <person name="Wei C."/>
            <person name="Faul C."/>
            <person name="Herbert S."/>
            <person name="Villegas I."/>
            <person name="Avila-Casado C."/>
            <person name="McGee M."/>
            <person name="Sugimoto H."/>
            <person name="Brown D."/>
            <person name="Kalluri R."/>
            <person name="Mundel P."/>
            <person name="Smith P.L."/>
            <person name="Clapham D.E."/>
            <person name="Pollak M.R."/>
        </authorList>
    </citation>
    <scope>VARIANTS FSGS2 SER-143; THR-270; CYS-895 AND LYS-897</scope>
    <scope>TISSUE SPECIFICITY</scope>
</reference>
<reference key="11">
    <citation type="journal article" date="2005" name="Science">
        <title>A mutation in the TRPC6 cation channel causes familial focal segmental glomerulosclerosis.</title>
        <authorList>
            <person name="Winn M.P."/>
            <person name="Conlon P.J."/>
            <person name="Lynn K.L."/>
            <person name="Farrington M.K."/>
            <person name="Creazzo T."/>
            <person name="Hawkins A.F."/>
            <person name="Daskalakis N."/>
            <person name="Kwan S.Y."/>
            <person name="Ebersviller S."/>
            <person name="Burchette J.L."/>
            <person name="Pericak-Vance M.A."/>
            <person name="Howell D.N."/>
            <person name="Vance J.M."/>
            <person name="Rosenberg P.B."/>
        </authorList>
    </citation>
    <scope>VARIANT FSGS2 GLN-112</scope>
</reference>
<reference key="12">
    <citation type="journal article" date="2009" name="Mutat. Res.">
        <title>Identification and functional analysis of a novel TRPC6 mutation associated with late onset familial focal segmental glomerulosclerosis in Chinese patients.</title>
        <authorList>
            <person name="Zhu B."/>
            <person name="Chen N."/>
            <person name="Wang Z.H."/>
            <person name="Pan X.X."/>
            <person name="Ren H."/>
            <person name="Zhang W."/>
            <person name="Wang W.M."/>
        </authorList>
    </citation>
    <scope>VARIANT SER-15</scope>
    <scope>MUTAGENESIS OF GLN-889</scope>
</reference>
<reference key="13">
    <citation type="journal article" date="2009" name="Nephrol. Dial. Transplant.">
        <title>TRPC6 mutational analysis in a large cohort of patients with focal segmental glomerulosclerosis.</title>
        <authorList>
            <consortium name="FSGS Study Group"/>
            <person name="Santin S."/>
            <person name="Ars E."/>
            <person name="Rossetti S."/>
            <person name="Salido E."/>
            <person name="Silva I."/>
            <person name="Garcia-Maset R."/>
            <person name="Gimenez I."/>
            <person name="Ruiz P."/>
            <person name="Mendizabal S."/>
            <person name="Luciano Nieto J."/>
            <person name="Pena A."/>
            <person name="Camacho J.A."/>
            <person name="Fraga G."/>
            <person name="Cobo M.A."/>
            <person name="Bernis C."/>
            <person name="Ortiz A."/>
            <person name="de Pablos A.L."/>
            <person name="Sanchez-Moreno A."/>
            <person name="Pintos G."/>
            <person name="Mirapeix E."/>
            <person name="Fernandez-Llama P."/>
            <person name="Ballarin J."/>
            <person name="Torra R."/>
            <person name="Zamora I."/>
            <person name="Lopez-Hellin J."/>
            <person name="Madrid A."/>
            <person name="Ventura C."/>
            <person name="Vilalta R."/>
            <person name="Espinosa L."/>
            <person name="Garcia C."/>
            <person name="Melgosa M."/>
            <person name="Navarro M."/>
            <person name="Gimenez A."/>
            <person name="Cots J.V."/>
            <person name="Alexandra S."/>
            <person name="Caramelo C."/>
            <person name="Egido J."/>
            <person name="San Jose M.D."/>
            <person name="de la Cerda F."/>
            <person name="Sala P."/>
            <person name="Raspall F."/>
            <person name="Vila A."/>
            <person name="Daza A.M."/>
            <person name="Vazquez M."/>
            <person name="Ecija J.L."/>
            <person name="Espinosa M."/>
            <person name="Justa M.L."/>
            <person name="Poveda R."/>
            <person name="Aparicio C."/>
            <person name="Rosell J."/>
            <person name="Muley R."/>
            <person name="Montenegro J."/>
            <person name="Gonzalez D."/>
            <person name="Hidalgo E."/>
            <person name="de Frutos D.B."/>
            <person name="Trillo E."/>
            <person name="Gracia S."/>
            <person name="de los Rios F.J."/>
        </authorList>
    </citation>
    <scope>VARIANTS FSGS2 SER-109; SER-125 AND PRO-780</scope>
</reference>
<reference key="14">
    <citation type="journal article" date="2009" name="PLoS ONE">
        <title>A novel TRPC6 mutation that causes childhood FSGS.</title>
        <authorList>
            <person name="Heeringa S.F."/>
            <person name="Moeller C.C."/>
            <person name="Du J."/>
            <person name="Yue L."/>
            <person name="Hinkes B."/>
            <person name="Chernin G."/>
            <person name="Vlangos C.N."/>
            <person name="Hoyer P.F."/>
            <person name="Reiser J."/>
            <person name="Hildebrandt F."/>
        </authorList>
    </citation>
    <scope>VARIANTS SER-15 AND VAL-404</scope>
    <scope>VARIANTS FSGS2 SER-143; THR-270 AND 874-LYS--ARG-931 DEL</scope>
    <scope>CHARACTERIZATION OF VARIANT FSGS2 SER-143</scope>
    <scope>MUTAGENESIS OF MET-132</scope>
    <scope>FUNCTION</scope>
    <scope>TRANSPORTER ACTIVITY</scope>
</reference>
<reference key="15">
    <citation type="journal article" date="2010" name="Clin. J. Am. Soc. Nephrol.">
        <title>Immunosuppression and renal outcome in congenital and pediatric steroid-resistant nephrotic syndrome.</title>
        <authorList>
            <person name="Buescher A.K."/>
            <person name="Kranz B."/>
            <person name="Buescher R."/>
            <person name="Hildebrandt F."/>
            <person name="Dworniczak B."/>
            <person name="Pennekamp P."/>
            <person name="Kuwertz-Broeking E."/>
            <person name="Wingen A.M."/>
            <person name="John U."/>
            <person name="Kemper M."/>
            <person name="Monnens L."/>
            <person name="Hoyer P.F."/>
            <person name="Weber S."/>
            <person name="Konrad M."/>
        </authorList>
    </citation>
    <scope>VARIANTS FSGS2 ALA-TYR-MET-PHE-88 INS AND ASP-757</scope>
</reference>
<reference key="16">
    <citation type="journal article" date="2011" name="Clin. J. Am. Soc. Nephrol.">
        <title>TRPC6 mutations in children with steroid-resistant nephrotic syndrome and atypical phenotype.</title>
        <authorList>
            <person name="Gigante M."/>
            <person name="Caridi G."/>
            <person name="Montemurno E."/>
            <person name="Soccio M."/>
            <person name="d'Apolito M."/>
            <person name="Cerullo G."/>
            <person name="Aucella F."/>
            <person name="Schirinzi A."/>
            <person name="Emma F."/>
            <person name="Massella L."/>
            <person name="Messina G."/>
            <person name="De Palo T."/>
            <person name="Ranieri E."/>
            <person name="Ghiggeri G.M."/>
            <person name="Gesualdo L."/>
        </authorList>
    </citation>
    <scope>VARIANTS FSGS2 SER-125 AND LEU-218</scope>
    <scope>VARIANT LEU-895</scope>
</reference>
<reference key="17">
    <citation type="journal article" date="2012" name="Clin. Nephrol.">
        <title>Mutations in podocyte genes are a rare cause of primary FSGS associated with ESRD in adult patients.</title>
        <authorList>
            <person name="Buescher A.K."/>
            <person name="Konrad M."/>
            <person name="Nagel M."/>
            <person name="Witzke O."/>
            <person name="Kribben A."/>
            <person name="Hoyer P.F."/>
            <person name="Weber S."/>
        </authorList>
    </citation>
    <scope>VARIANT FSGS2 HIS-360</scope>
</reference>
<reference key="18">
    <citation type="journal article" date="2012" name="Nephrol. Dial. Transplant.">
        <title>TRPC6 gene variants in Turkish children with steroid-resistant nephrotic syndrome.</title>
        <authorList>
            <person name="Mir S."/>
            <person name="Yavascan O."/>
            <person name="Berdeli A."/>
            <person name="Sozeri B."/>
        </authorList>
    </citation>
    <scope>VARIANT FSGS2 ALA-395</scope>
    <scope>VARIANT VAL-404</scope>
</reference>
<reference key="19">
    <citation type="journal article" date="2013" name="Kidney Int.">
        <title>Mutations in the INF2 gene account for a significant proportion of familial but not sporadic focal and segmental glomerulosclerosis.</title>
        <authorList>
            <person name="Barua M."/>
            <person name="Brown E.J."/>
            <person name="Charoonratana V.T."/>
            <person name="Genovese G."/>
            <person name="Sun H."/>
            <person name="Pollak M.R."/>
        </authorList>
    </citation>
    <scope>VARIANTS FSGS2 THR-270; CYS-895; GLU-897 DEL AND LYS-897</scope>
</reference>
<reference key="20">
    <citation type="journal article" date="2013" name="Nephrol. Dial. Transplant.">
        <title>New TRPC6 gain-of-function mutation in a non-consanguineous Dutch family with late-onset focal segmental glomerulosclerosis.</title>
        <authorList>
            <person name="Hofstra J.M."/>
            <person name="Lainez S."/>
            <person name="van Kuijk W.H."/>
            <person name="Schoots J."/>
            <person name="Baltissen M.P."/>
            <person name="Hoefsloot L.H."/>
            <person name="Knoers N.V."/>
            <person name="Berden J.H."/>
            <person name="Bindels R.J."/>
            <person name="van der Vlag J."/>
            <person name="Hoenderop J.G."/>
            <person name="Wetzels J.F."/>
            <person name="Nijenhuis T."/>
        </authorList>
    </citation>
    <scope>VARIANTS FSGS2 GLN-175 AND CYS-895</scope>
    <scope>CHARACTERIZATION OF VARIANTS FSGS2 GLN-175 AND CYS-895</scope>
    <scope>FUNCTION</scope>
    <scope>SUBCELLULAR LOCATION</scope>
</reference>
<reference key="21">
    <citation type="journal article" date="2016" name="J. Am. Soc. Nephrol.">
        <title>TRPC6 G757D Loss-of-Function Mutation Associates with FSGS.</title>
        <authorList>
            <person name="Riehle M."/>
            <person name="Buescher A.K."/>
            <person name="Gohlke B.O."/>
            <person name="Kassmann M."/>
            <person name="Kolatsi-Joannou M."/>
            <person name="Braesen J.H."/>
            <person name="Nagel M."/>
            <person name="Becker J.U."/>
            <person name="Winyard P."/>
            <person name="Hoyer P.F."/>
            <person name="Preissner R."/>
            <person name="Krautwurst D."/>
            <person name="Gollasch M."/>
            <person name="Weber S."/>
            <person name="Harteneck C."/>
        </authorList>
    </citation>
    <scope>MUTAGENESIS OF ASN-110; MET-132; 755-GLU--GLY-757; 755-GLU-GLU-756; 826-LYS-LYS-827 AND GLN-889</scope>
    <scope>VARIANTS FSGS2 SER-109; GLN-112; SER-125; SER-143; GLN-175; LEU-218; ALA-395; ASP-757; PRO-780; CYS-895; LEU-895 AND LYS-897</scope>
    <scope>CHARACTERIZATION OF VARIANTS FSGS2 SER-109; GLN-112; SER-125; SER-143; GLN-175; LEU-218; ALA-395; ASP-757; PRO-780; CYS-895; LEU-895 AND LYS-897</scope>
    <scope>VARIANT VAL-404</scope>
    <scope>CHARACTERIZATION OF VARIANT VAL-404</scope>
    <scope>FUNCTION</scope>
    <scope>SUBCELLULAR LOCATION</scope>
    <scope>SUBUNIT</scope>
    <scope>TRANSPORTER ACTIVITY</scope>
</reference>
<name>TRPC6_HUMAN</name>
<organism>
    <name type="scientific">Homo sapiens</name>
    <name type="common">Human</name>
    <dbReference type="NCBI Taxonomy" id="9606"/>
    <lineage>
        <taxon>Eukaryota</taxon>
        <taxon>Metazoa</taxon>
        <taxon>Chordata</taxon>
        <taxon>Craniata</taxon>
        <taxon>Vertebrata</taxon>
        <taxon>Euteleostomi</taxon>
        <taxon>Mammalia</taxon>
        <taxon>Eutheria</taxon>
        <taxon>Euarchontoglires</taxon>
        <taxon>Primates</taxon>
        <taxon>Haplorrhini</taxon>
        <taxon>Catarrhini</taxon>
        <taxon>Hominidae</taxon>
        <taxon>Homo</taxon>
    </lineage>
</organism>
<sequence>MSQSPAFGPRRGSSPRGAAGAAARRNESQDYLLMDSELGEDGCPQAPLPCYGYYPCFRGSDNRLAHRRQTVLREKGRRLANRGPAYMFSDRSTSLSIEEERFLDAAEYGNIPVVRKMLEECHSLNVNCVDYMGQNALQLAVANEHLEITELLLKKENLSRVGDALLLAISKGYVRIVEAILSHPAFAEGKRLATSPSQSELQQDDFYAYDEDGTRFSHDVTPIILAAHCQEYEIVHTLLRKGARIERPHDYFCKCNDCNQKQKHDSFSHSRSRINAYKGLASPAYLSLSSEDPVMTALELSNELAVLANIEKEFKNDYKKLSMQCKDFVVGLLDLCRNTEEVEAILNGDVETLQSGDHGRPNLSRLKLAIKYEVKKFVAHPNCQQQLLSIWYENLSGLRQQTMAVKFLVVLAVAIGLPFLALIYWFAPCSKMGKIMRGPFMKFVAHAASFTIFLGLLVMNAADRFEGTKLLPNETSTDNAKQLFRMKTSCFSWMEMLIISWVIGMIWAECKEIWTQGPKEYLFELWNMLDFGMLAIFAASFIARFMAFWHASKAQSIIDANDTLKDLTKVTLGDNVKYYNLARIKWDPSDPQIISEGLYAIAVVLSFSRIAYILPANESFGPLQISLGRTVKDIFKFMVIFIMVFVAFMIGMFNLYSYYIGAKQNEAFTTVEESFKTLFWAIFGLSEVKSVVINYNHKFIENIGYVLYGVYNVTMVIVLLNMLIAMINSSFQEIEDDADVEWKFARAKLWFSYFEEGRTLPVPFNLVPSPKSLFYLLLKLKKWISELFQGHKKGFQEDAEMNKINEEKKLGILGSHEDLSKLSLDKKQVGHNKQPSIRSSEDFHLNSFNNPPRQYQKIMKRLIKRYVLQAQIDKESDEVNEGELKEIKQDISSLRYELLEEKSQNTEDLAELIRELGEKLSMEPNQEETNR</sequence>
<proteinExistence type="evidence at protein level"/>
<feature type="chain" id="PRO_0000215322" description="Short transient receptor potential channel 6">
    <location>
        <begin position="1"/>
        <end position="931"/>
    </location>
</feature>
<feature type="topological domain" description="Cytoplasmic" evidence="2">
    <location>
        <begin position="1"/>
        <end position="438"/>
    </location>
</feature>
<feature type="transmembrane region" description="Helical" evidence="2">
    <location>
        <begin position="439"/>
        <end position="459"/>
    </location>
</feature>
<feature type="topological domain" description="Extracellular" evidence="2">
    <location>
        <begin position="460"/>
        <end position="487"/>
    </location>
</feature>
<feature type="transmembrane region" description="Helical" evidence="2">
    <location>
        <begin position="488"/>
        <end position="508"/>
    </location>
</feature>
<feature type="topological domain" description="Cytoplasmic" evidence="2">
    <location>
        <begin position="509"/>
        <end position="521"/>
    </location>
</feature>
<feature type="transmembrane region" description="Helical" evidence="2">
    <location>
        <begin position="522"/>
        <end position="542"/>
    </location>
</feature>
<feature type="topological domain" description="Extracellular" evidence="2">
    <location>
        <begin position="543"/>
        <end position="592"/>
    </location>
</feature>
<feature type="transmembrane region" description="Helical" evidence="2">
    <location>
        <begin position="593"/>
        <end position="613"/>
    </location>
</feature>
<feature type="topological domain" description="Cytoplasmic" evidence="2">
    <location>
        <begin position="614"/>
        <end position="636"/>
    </location>
</feature>
<feature type="transmembrane region" description="Helical" evidence="2">
    <location>
        <begin position="637"/>
        <end position="657"/>
    </location>
</feature>
<feature type="topological domain" description="Extracellular" evidence="2">
    <location>
        <begin position="658"/>
        <end position="706"/>
    </location>
</feature>
<feature type="transmembrane region" description="Helical" evidence="2">
    <location>
        <begin position="707"/>
        <end position="727"/>
    </location>
</feature>
<feature type="topological domain" description="Cytoplasmic" evidence="2">
    <location>
        <begin position="728"/>
        <end position="931"/>
    </location>
</feature>
<feature type="repeat" description="ANK 1">
    <location>
        <begin position="97"/>
        <end position="126"/>
    </location>
</feature>
<feature type="repeat" description="ANK 2">
    <location>
        <begin position="132"/>
        <end position="161"/>
    </location>
</feature>
<feature type="repeat" description="ANK 3">
    <location>
        <begin position="163"/>
        <end position="189"/>
    </location>
</feature>
<feature type="repeat" description="ANK 4">
    <location>
        <begin position="218"/>
        <end position="247"/>
    </location>
</feature>
<feature type="region of interest" description="Disordered" evidence="3">
    <location>
        <begin position="1"/>
        <end position="26"/>
    </location>
</feature>
<feature type="compositionally biased region" description="Low complexity" evidence="3">
    <location>
        <begin position="1"/>
        <end position="23"/>
    </location>
</feature>
<feature type="modified residue" description="Phosphoserine" evidence="25">
    <location>
        <position position="815"/>
    </location>
</feature>
<feature type="glycosylation site" description="N-linked (GlcNAc...) asparagine" evidence="4">
    <location>
        <position position="473"/>
    </location>
</feature>
<feature type="glycosylation site" description="N-linked (GlcNAc...) asparagine" evidence="4">
    <location>
        <position position="561"/>
    </location>
</feature>
<feature type="splice variant" id="VSP_006572" description="In isoform 2." evidence="20">
    <location>
        <begin position="316"/>
        <end position="431"/>
    </location>
</feature>
<feature type="splice variant" id="VSP_006573" description="In isoform 3." evidence="20">
    <location>
        <begin position="377"/>
        <end position="431"/>
    </location>
</feature>
<feature type="sequence variant" id="VAR_079784" description="In dbSNP:rs3802829." evidence="9 11">
    <original>P</original>
    <variation>S</variation>
    <location>
        <position position="15"/>
    </location>
</feature>
<feature type="sequence variant" id="VAR_079785" description="In FSGS2; uncertain significance." evidence="12">
    <original>F</original>
    <variation>FAYMF</variation>
    <location>
        <position position="88"/>
    </location>
</feature>
<feature type="sequence variant" id="VAR_079786" description="In FSGS2; increases calcium ion transport." evidence="10 18">
    <original>G</original>
    <variation>S</variation>
    <location>
        <position position="109"/>
    </location>
</feature>
<feature type="sequence variant" id="VAR_026730" description="In FSGS2; increases calcium ion transport; dbSNP:rs121434390." evidence="6 18">
    <original>P</original>
    <variation>Q</variation>
    <location>
        <position position="112"/>
    </location>
</feature>
<feature type="sequence variant" id="VAR_067247" description="In FSGS2; uncertain significance; decreases calcium ion transport; dbSNP:rs146776939." evidence="10 14 18">
    <original>N</original>
    <variation>S</variation>
    <location>
        <position position="125"/>
    </location>
</feature>
<feature type="sequence variant" id="VAR_026731" description="In FSGS2; increases cation channel activity; does not change the outward peak current; increases significantly the inward peak current amplitude; increases calcium ion transport; dbSNP:rs121434391." evidence="7 11 18">
    <original>N</original>
    <variation>S</variation>
    <location>
        <position position="143"/>
    </location>
</feature>
<feature type="sequence variant" id="VAR_038419" description="In dbSNP:rs35857503.">
    <original>N</original>
    <variation>T</variation>
    <location>
        <position position="157"/>
    </location>
</feature>
<feature type="sequence variant" id="VAR_079787" description="In FSGS2; increases cation channel activity; does not change plasma membrane expression; increases calcium ion transport; dbSNP:rs1451194842." evidence="17 18">
    <original>R</original>
    <variation>Q</variation>
    <location>
        <position position="175"/>
    </location>
</feature>
<feature type="sequence variant" id="VAR_067248" description="In FSGS2; increases calcium ion transport; dbSNP:rs779430565." evidence="14 18">
    <original>H</original>
    <variation>L</variation>
    <location>
        <position position="218"/>
    </location>
</feature>
<feature type="sequence variant" id="VAR_026732" description="In FSGS2; dbSNP:rs121434392." evidence="7 11 16">
    <original>S</original>
    <variation>T</variation>
    <location>
        <position position="270"/>
    </location>
</feature>
<feature type="sequence variant" id="VAR_079788" description="In FSGS2; uncertain significance; dbSNP:rs777715086." evidence="15">
    <original>R</original>
    <variation>H</variation>
    <location>
        <position position="360"/>
    </location>
</feature>
<feature type="sequence variant" id="VAR_079789" description="In FSGS2; uncertain significance; decreases calcium ion transport; requires 2 nucleotide substitutions." evidence="13 18">
    <original>L</original>
    <variation>A</variation>
    <location>
        <position position="395"/>
    </location>
</feature>
<feature type="sequence variant" id="VAR_061861" description="Increases calcium ion transport; dbSNP:rs36111323." evidence="11 13 18">
    <original>A</original>
    <variation>V</variation>
    <location>
        <position position="404"/>
    </location>
</feature>
<feature type="sequence variant" id="VAR_079790" description="In FSGS2; decreases calcium ion transport; does not change localization at cell membrane; does not affect homodimer formation." evidence="12 18">
    <original>G</original>
    <variation>D</variation>
    <location>
        <position position="757"/>
    </location>
</feature>
<feature type="sequence variant" id="VAR_079791" description="In FSGS2; uncertain significance; decreases calcium ion transport; dbSNP:rs771594597." evidence="10 18">
    <original>L</original>
    <variation>P</variation>
    <location>
        <position position="780"/>
    </location>
</feature>
<feature type="sequence variant" id="VAR_079792" description="In FSGS2." evidence="11">
    <location>
        <begin position="874"/>
        <end position="931"/>
    </location>
</feature>
<feature type="sequence variant" id="VAR_026733" description="In FSGS2; increases cation channel activity; does not change plasma membrane expression; significantly reduces the ratio of cell-surface to total expression; increases calcium ion transport; dbSNP:rs121434394." evidence="7 16 17 18">
    <original>R</original>
    <variation>C</variation>
    <location>
        <position position="895"/>
    </location>
</feature>
<feature type="sequence variant" id="VAR_067249" description="In FSGS2; decreases calcium ion transport; dbSNP:rs1591517912." evidence="14 18">
    <original>R</original>
    <variation>L</variation>
    <location>
        <position position="895"/>
    </location>
</feature>
<feature type="sequence variant" id="VAR_026734" description="In FSGS2; increases calcium ion transport; dbSNP:rs121434395." evidence="7 16 18">
    <original>E</original>
    <variation>K</variation>
    <location>
        <position position="897"/>
    </location>
</feature>
<feature type="sequence variant" id="VAR_079793" description="In FSGS2." evidence="16">
    <location>
        <position position="897"/>
    </location>
</feature>
<feature type="mutagenesis site" description="Increases calcium ion transport." evidence="18">
    <original>N</original>
    <variation>H</variation>
    <location>
        <position position="110"/>
    </location>
</feature>
<feature type="mutagenesis site" description="No effect on RNF24-binding; when associated with A-127; A-128 and A-130." evidence="8">
    <original>N</original>
    <variation>A</variation>
    <location>
        <position position="125"/>
    </location>
</feature>
<feature type="mutagenesis site" description="No effect on RNF24-binding; when associated with A-125; A-128 and A-130." evidence="8">
    <original>N</original>
    <variation>A</variation>
    <location>
        <position position="127"/>
    </location>
</feature>
<feature type="mutagenesis site" description="No effect on RNF24-binding; when associated with A-125; A-127 and A-130." evidence="8">
    <original>C</original>
    <variation>A</variation>
    <location>
        <position position="128"/>
    </location>
</feature>
<feature type="mutagenesis site" description="No effect on RNF24-binding; when associated with A-125; A-127 and A-128." evidence="8">
    <original>D</original>
    <variation>A</variation>
    <location>
        <position position="130"/>
    </location>
</feature>
<feature type="mutagenesis site" description="Increases cation channel activity. Increases significantly inward and outward currents and does not show channel inactivation. Increases calcium ion transport." evidence="11 18">
    <original>M</original>
    <variation>T</variation>
    <location>
        <position position="132"/>
    </location>
</feature>
<feature type="mutagenesis site" description="Constitutively activates channel." evidence="4">
    <original>N</original>
    <variation>Q</variation>
    <location>
        <position position="561"/>
    </location>
</feature>
<feature type="mutagenesis site" description="Decreases calcium ion transport." evidence="18">
    <original>EEG</original>
    <variation>KKR</variation>
    <location>
        <begin position="755"/>
        <end position="757"/>
    </location>
</feature>
<feature type="mutagenesis site" description="Increases calcium ion transport." evidence="18">
    <original>EE</original>
    <variation>KK</variation>
    <location>
        <begin position="755"/>
        <end position="756"/>
    </location>
</feature>
<feature type="mutagenesis site" description="Decreases calcium ion transport." evidence="18">
    <original>KK</original>
    <variation>EE</variation>
    <location>
        <begin position="826"/>
        <end position="827"/>
    </location>
</feature>
<feature type="mutagenesis site" description="Increases calcium transport. Increases calcium ion transport." evidence="9 18">
    <original>Q</original>
    <variation>K</variation>
    <location>
        <position position="889"/>
    </location>
</feature>
<feature type="sequence conflict" description="In Ref. 3; CAC01686." evidence="23" ref="3">
    <original>C</original>
    <variation>R</variation>
    <location>
        <position position="336"/>
    </location>
</feature>
<feature type="sequence conflict" description="In Ref. 5; CAC06090." evidence="23" ref="5">
    <original>K</original>
    <variation>R</variation>
    <location>
        <position position="585"/>
    </location>
</feature>
<feature type="sequence conflict" description="In Ref. 3; CAC01686." evidence="23" ref="3">
    <original>I</original>
    <variation>T</variation>
    <location>
        <position position="613"/>
    </location>
</feature>
<feature type="helix" evidence="26">
    <location>
        <begin position="97"/>
        <end position="108"/>
    </location>
</feature>
<feature type="helix" evidence="26">
    <location>
        <begin position="111"/>
        <end position="119"/>
    </location>
</feature>
<feature type="strand" evidence="28">
    <location>
        <begin position="122"/>
        <end position="124"/>
    </location>
</feature>
<feature type="strand" evidence="26">
    <location>
        <begin position="131"/>
        <end position="133"/>
    </location>
</feature>
<feature type="helix" evidence="26">
    <location>
        <begin position="136"/>
        <end position="142"/>
    </location>
</feature>
<feature type="helix" evidence="26">
    <location>
        <begin position="146"/>
        <end position="152"/>
    </location>
</feature>
<feature type="strand" evidence="27">
    <location>
        <begin position="155"/>
        <end position="157"/>
    </location>
</feature>
<feature type="helix" evidence="26">
    <location>
        <begin position="161"/>
        <end position="171"/>
    </location>
</feature>
<feature type="helix" evidence="26">
    <location>
        <begin position="174"/>
        <end position="180"/>
    </location>
</feature>
<feature type="helix" evidence="27">
    <location>
        <begin position="184"/>
        <end position="186"/>
    </location>
</feature>
<feature type="strand" evidence="27">
    <location>
        <begin position="187"/>
        <end position="190"/>
    </location>
</feature>
<feature type="strand" evidence="26">
    <location>
        <begin position="205"/>
        <end position="212"/>
    </location>
</feature>
<feature type="strand" evidence="26">
    <location>
        <begin position="214"/>
        <end position="216"/>
    </location>
</feature>
<feature type="helix" evidence="26">
    <location>
        <begin position="222"/>
        <end position="228"/>
    </location>
</feature>
<feature type="helix" evidence="26">
    <location>
        <begin position="232"/>
        <end position="240"/>
    </location>
</feature>
<feature type="helix" evidence="26">
    <location>
        <begin position="258"/>
        <end position="264"/>
    </location>
</feature>
<feature type="helix" evidence="26">
    <location>
        <begin position="268"/>
        <end position="280"/>
    </location>
</feature>
<feature type="helix" evidence="26">
    <location>
        <begin position="283"/>
        <end position="289"/>
    </location>
</feature>
<feature type="helix" evidence="26">
    <location>
        <begin position="293"/>
        <end position="310"/>
    </location>
</feature>
<feature type="strand" evidence="26">
    <location>
        <begin position="312"/>
        <end position="314"/>
    </location>
</feature>
<feature type="helix" evidence="26">
    <location>
        <begin position="315"/>
        <end position="334"/>
    </location>
</feature>
<feature type="helix" evidence="26">
    <location>
        <begin position="339"/>
        <end position="346"/>
    </location>
</feature>
<feature type="turn" evidence="27">
    <location>
        <begin position="350"/>
        <end position="352"/>
    </location>
</feature>
<feature type="strand" evidence="26">
    <location>
        <begin position="357"/>
        <end position="360"/>
    </location>
</feature>
<feature type="helix" evidence="26">
    <location>
        <begin position="364"/>
        <end position="371"/>
    </location>
</feature>
<feature type="helix" evidence="26">
    <location>
        <begin position="375"/>
        <end position="378"/>
    </location>
</feature>
<feature type="helix" evidence="26">
    <location>
        <begin position="381"/>
        <end position="392"/>
    </location>
</feature>
<feature type="turn" evidence="26">
    <location>
        <begin position="397"/>
        <end position="399"/>
    </location>
</feature>
<feature type="helix" evidence="26">
    <location>
        <begin position="405"/>
        <end position="415"/>
    </location>
</feature>
<feature type="helix" evidence="26">
    <location>
        <begin position="417"/>
        <end position="426"/>
    </location>
</feature>
<feature type="strand" evidence="27">
    <location>
        <begin position="428"/>
        <end position="430"/>
    </location>
</feature>
<feature type="turn" evidence="26">
    <location>
        <begin position="431"/>
        <end position="437"/>
    </location>
</feature>
<feature type="helix" evidence="26">
    <location>
        <begin position="439"/>
        <end position="459"/>
    </location>
</feature>
<feature type="helix" evidence="26">
    <location>
        <begin position="460"/>
        <end position="464"/>
    </location>
</feature>
<feature type="strand" evidence="26">
    <location>
        <begin position="478"/>
        <end position="482"/>
    </location>
</feature>
<feature type="helix" evidence="26">
    <location>
        <begin position="484"/>
        <end position="487"/>
    </location>
</feature>
<feature type="helix" evidence="26">
    <location>
        <begin position="493"/>
        <end position="520"/>
    </location>
</feature>
<feature type="turn" evidence="26">
    <location>
        <begin position="521"/>
        <end position="523"/>
    </location>
</feature>
<feature type="helix" evidence="26">
    <location>
        <begin position="526"/>
        <end position="557"/>
    </location>
</feature>
<feature type="helix" evidence="27">
    <location>
        <begin position="578"/>
        <end position="580"/>
    </location>
</feature>
<feature type="helix" evidence="27">
    <location>
        <begin position="583"/>
        <end position="585"/>
    </location>
</feature>
<feature type="helix" evidence="26">
    <location>
        <begin position="591"/>
        <end position="605"/>
    </location>
</feature>
<feature type="helix" evidence="26">
    <location>
        <begin position="606"/>
        <end position="612"/>
    </location>
</feature>
<feature type="helix" evidence="26">
    <location>
        <begin position="614"/>
        <end position="616"/>
    </location>
</feature>
<feature type="turn" evidence="26">
    <location>
        <begin position="618"/>
        <end position="620"/>
    </location>
</feature>
<feature type="helix" evidence="26">
    <location>
        <begin position="621"/>
        <end position="630"/>
    </location>
</feature>
<feature type="helix" evidence="26">
    <location>
        <begin position="631"/>
        <end position="633"/>
    </location>
</feature>
<feature type="turn" evidence="26">
    <location>
        <begin position="634"/>
        <end position="636"/>
    </location>
</feature>
<feature type="helix" evidence="26">
    <location>
        <begin position="637"/>
        <end position="656"/>
    </location>
</feature>
<feature type="strand" evidence="26">
    <location>
        <begin position="660"/>
        <end position="666"/>
    </location>
</feature>
<feature type="strand" evidence="28">
    <location>
        <begin position="668"/>
        <end position="670"/>
    </location>
</feature>
<feature type="helix" evidence="26">
    <location>
        <begin position="671"/>
        <end position="680"/>
    </location>
</feature>
<feature type="turn" evidence="26">
    <location>
        <begin position="681"/>
        <end position="684"/>
    </location>
</feature>
<feature type="helix" evidence="26">
    <location>
        <begin position="688"/>
        <end position="691"/>
    </location>
</feature>
<feature type="strand" evidence="26">
    <location>
        <begin position="693"/>
        <end position="696"/>
    </location>
</feature>
<feature type="helix" evidence="26">
    <location>
        <begin position="698"/>
        <end position="731"/>
    </location>
</feature>
<feature type="helix" evidence="26">
    <location>
        <begin position="737"/>
        <end position="751"/>
    </location>
</feature>
<feature type="strand" evidence="26">
    <location>
        <begin position="754"/>
        <end position="757"/>
    </location>
</feature>
<feature type="turn" evidence="26">
    <location>
        <begin position="762"/>
        <end position="766"/>
    </location>
</feature>
<feature type="helix" evidence="26">
    <location>
        <begin position="854"/>
        <end position="875"/>
    </location>
</feature>
<feature type="helix" evidence="26">
    <location>
        <begin position="881"/>
        <end position="917"/>
    </location>
</feature>
<comment type="function">
    <text evidence="11 17 18 19">Forms a receptor-activated non-selective calcium permeant cation channel (PubMed:19936226, PubMed:23291369, PubMed:26892346, PubMed:9930701). Probably is operated by a phosphatidylinositol second messenger system activated by receptor tyrosine kinases or G-protein coupled receptors. Activated by diacylglycerol (DAG) in a membrane-delimited fashion, independently of protein kinase C (PubMed:26892346). Seems not to be activated by intracellular calcium store depletion.</text>
</comment>
<comment type="catalytic activity">
    <reaction evidence="11 18 19">
        <text>Ca(2+)(in) = Ca(2+)(out)</text>
        <dbReference type="Rhea" id="RHEA:29671"/>
        <dbReference type="ChEBI" id="CHEBI:29108"/>
    </reaction>
</comment>
<comment type="activity regulation">
    <text evidence="19">Activated by diacylglycerol (DAG) in a membrane-delimited fashion, independently of protein kinase C.</text>
</comment>
<comment type="subunit">
    <text evidence="5 8 18">Homodimer; forms channel complex (PubMed:26892346). Interacts with MX1 and RNF24 (PubMed:15757897, PubMed:17850865).</text>
</comment>
<comment type="interaction">
    <interactant intactId="EBI-929362">
        <id>Q9Y210</id>
    </interactant>
    <interactant intactId="EBI-929476">
        <id>P20591</id>
        <label>MX1</label>
    </interactant>
    <organismsDiffer>false</organismsDiffer>
    <experiments>4</experiments>
</comment>
<comment type="subcellular location">
    <subcellularLocation>
        <location evidence="17 18">Cell membrane</location>
        <topology evidence="2">Multi-pass membrane protein</topology>
    </subcellularLocation>
</comment>
<comment type="alternative products">
    <event type="alternative splicing"/>
    <isoform>
        <id>Q9Y210-1</id>
        <name>1</name>
        <sequence type="displayed"/>
    </isoform>
    <isoform>
        <id>Q9Y210-2</id>
        <name>2</name>
        <sequence type="described" ref="VSP_006572"/>
    </isoform>
    <isoform>
        <id>Q9Y210-3</id>
        <name>3</name>
        <sequence type="described" ref="VSP_006573"/>
    </isoform>
</comment>
<comment type="tissue specificity">
    <text evidence="7">Expressed primarily in placenta, lung, spleen, ovary and small intestine. Expressed in podocytes and is a component of the glomerular slit diaphragm.</text>
</comment>
<comment type="PTM">
    <text evidence="1">Phosphorylated by FYN, leading to an increase of TRPC6 channel activity.</text>
</comment>
<comment type="disease" evidence="6 7 10 11 12 13 14 15 16 17 18">
    <disease id="DI-01621">
        <name>Focal segmental glomerulosclerosis 2</name>
        <acronym>FSGS2</acronym>
        <description>A renal pathology defined by the presence of segmental sclerosis in glomeruli and resulting in proteinuria, reduced glomerular filtration rate and progressive decline in renal function. Renal insufficiency often progresses to end-stage renal disease, a highly morbid state requiring either dialysis therapy or kidney transplantation.</description>
        <dbReference type="MIM" id="603965"/>
    </disease>
    <text>The disease is caused by variants affecting the gene represented in this entry.</text>
</comment>
<comment type="similarity">
    <text evidence="23">Belongs to the transient receptor (TC 1.A.4) family. STrpC subfamily. TRPC6 sub-subfamily.</text>
</comment>
<gene>
    <name evidence="21 24" type="primary">TRPC6</name>
    <name evidence="22" type="synonym">TRP6</name>
</gene>
<evidence type="ECO:0000250" key="1">
    <source>
        <dbReference type="UniProtKB" id="Q61143"/>
    </source>
</evidence>
<evidence type="ECO:0000255" key="2"/>
<evidence type="ECO:0000256" key="3">
    <source>
        <dbReference type="SAM" id="MobiDB-lite"/>
    </source>
</evidence>
<evidence type="ECO:0000269" key="4">
    <source>
    </source>
</evidence>
<evidence type="ECO:0000269" key="5">
    <source>
    </source>
</evidence>
<evidence type="ECO:0000269" key="6">
    <source>
    </source>
</evidence>
<evidence type="ECO:0000269" key="7">
    <source>
    </source>
</evidence>
<evidence type="ECO:0000269" key="8">
    <source>
    </source>
</evidence>
<evidence type="ECO:0000269" key="9">
    <source>
    </source>
</evidence>
<evidence type="ECO:0000269" key="10">
    <source>
    </source>
</evidence>
<evidence type="ECO:0000269" key="11">
    <source>
    </source>
</evidence>
<evidence type="ECO:0000269" key="12">
    <source>
    </source>
</evidence>
<evidence type="ECO:0000269" key="13">
    <source>
    </source>
</evidence>
<evidence type="ECO:0000269" key="14">
    <source>
    </source>
</evidence>
<evidence type="ECO:0000269" key="15">
    <source>
    </source>
</evidence>
<evidence type="ECO:0000269" key="16">
    <source>
    </source>
</evidence>
<evidence type="ECO:0000269" key="17">
    <source>
    </source>
</evidence>
<evidence type="ECO:0000269" key="18">
    <source>
    </source>
</evidence>
<evidence type="ECO:0000269" key="19">
    <source>
    </source>
</evidence>
<evidence type="ECO:0000303" key="20">
    <source>
    </source>
</evidence>
<evidence type="ECO:0000303" key="21">
    <source>
    </source>
</evidence>
<evidence type="ECO:0000303" key="22">
    <source ref="5"/>
</evidence>
<evidence type="ECO:0000305" key="23"/>
<evidence type="ECO:0000312" key="24">
    <source>
        <dbReference type="HGNC" id="HGNC:12338"/>
    </source>
</evidence>
<evidence type="ECO:0007744" key="25">
    <source>
    </source>
</evidence>
<evidence type="ECO:0007829" key="26">
    <source>
        <dbReference type="PDB" id="6UZ8"/>
    </source>
</evidence>
<evidence type="ECO:0007829" key="27">
    <source>
        <dbReference type="PDB" id="7DXF"/>
    </source>
</evidence>
<evidence type="ECO:0007829" key="28">
    <source>
        <dbReference type="PDB" id="7DXG"/>
    </source>
</evidence>
<keyword id="KW-0002">3D-structure</keyword>
<keyword id="KW-0025">Alternative splicing</keyword>
<keyword id="KW-0040">ANK repeat</keyword>
<keyword id="KW-0106">Calcium</keyword>
<keyword id="KW-0107">Calcium channel</keyword>
<keyword id="KW-0109">Calcium transport</keyword>
<keyword id="KW-1003">Cell membrane</keyword>
<keyword id="KW-0225">Disease variant</keyword>
<keyword id="KW-0325">Glycoprotein</keyword>
<keyword id="KW-0407">Ion channel</keyword>
<keyword id="KW-0406">Ion transport</keyword>
<keyword id="KW-0472">Membrane</keyword>
<keyword id="KW-0597">Phosphoprotein</keyword>
<keyword id="KW-1267">Proteomics identification</keyword>
<keyword id="KW-1185">Reference proteome</keyword>
<keyword id="KW-0677">Repeat</keyword>
<keyword id="KW-0812">Transmembrane</keyword>
<keyword id="KW-1133">Transmembrane helix</keyword>
<keyword id="KW-0813">Transport</keyword>
<dbReference type="EMBL" id="AF080394">
    <property type="protein sequence ID" value="AAC63289.2"/>
    <property type="molecule type" value="mRNA"/>
</dbReference>
<dbReference type="EMBL" id="AJ006276">
    <property type="protein sequence ID" value="CAA06943.1"/>
    <property type="molecule type" value="mRNA"/>
</dbReference>
<dbReference type="EMBL" id="AJ271066">
    <property type="protein sequence ID" value="CAC01684.1"/>
    <property type="molecule type" value="mRNA"/>
</dbReference>
<dbReference type="EMBL" id="AJ271067">
    <property type="protein sequence ID" value="CAC01685.1"/>
    <property type="molecule type" value="mRNA"/>
</dbReference>
<dbReference type="EMBL" id="AJ271068">
    <property type="protein sequence ID" value="CAC01686.1"/>
    <property type="molecule type" value="mRNA"/>
</dbReference>
<dbReference type="EMBL" id="BC093658">
    <property type="protein sequence ID" value="AAH93658.1"/>
    <property type="molecule type" value="mRNA"/>
</dbReference>
<dbReference type="EMBL" id="BC093660">
    <property type="protein sequence ID" value="AAH93660.1"/>
    <property type="molecule type" value="mRNA"/>
</dbReference>
<dbReference type="EMBL" id="AJ007018">
    <property type="protein sequence ID" value="CAC06090.1"/>
    <property type="molecule type" value="mRNA"/>
</dbReference>
<dbReference type="CCDS" id="CCDS8311.1">
    <molecule id="Q9Y210-1"/>
</dbReference>
<dbReference type="RefSeq" id="NP_004612.2">
    <molecule id="Q9Y210-1"/>
    <property type="nucleotide sequence ID" value="NM_004621.5"/>
</dbReference>
<dbReference type="RefSeq" id="XP_016873710.1">
    <molecule id="Q9Y210-2"/>
    <property type="nucleotide sequence ID" value="XM_017018221.3"/>
</dbReference>
<dbReference type="RefSeq" id="XP_054225778.1">
    <molecule id="Q9Y210-2"/>
    <property type="nucleotide sequence ID" value="XM_054369803.1"/>
</dbReference>
<dbReference type="PDB" id="5YX9">
    <property type="method" value="EM"/>
    <property type="resolution" value="3.80 A"/>
    <property type="chains" value="A/B/C/D=1-931"/>
</dbReference>
<dbReference type="PDB" id="6UZ8">
    <property type="method" value="EM"/>
    <property type="resolution" value="2.84 A"/>
    <property type="chains" value="A/B/C/D=85-931"/>
</dbReference>
<dbReference type="PDB" id="6UZA">
    <property type="method" value="EM"/>
    <property type="resolution" value="3.08 A"/>
    <property type="chains" value="A/B/C/D=85-931"/>
</dbReference>
<dbReference type="PDB" id="7A6U">
    <property type="method" value="EM"/>
    <property type="resolution" value="3.62 A"/>
    <property type="chains" value="A/B/C/D=1-931"/>
</dbReference>
<dbReference type="PDB" id="7DXF">
    <property type="method" value="EM"/>
    <property type="resolution" value="2.90 A"/>
    <property type="chains" value="A/B/C/D=1-931"/>
</dbReference>
<dbReference type="PDB" id="7DXG">
    <property type="method" value="EM"/>
    <property type="resolution" value="2.90 A"/>
    <property type="chains" value="A/B/C/D=1-931"/>
</dbReference>
<dbReference type="PDBsum" id="5YX9"/>
<dbReference type="PDBsum" id="6UZ8"/>
<dbReference type="PDBsum" id="6UZA"/>
<dbReference type="PDBsum" id="7A6U"/>
<dbReference type="PDBsum" id="7DXF"/>
<dbReference type="PDBsum" id="7DXG"/>
<dbReference type="EMDB" id="EMD-11674"/>
<dbReference type="EMDB" id="EMD-20953"/>
<dbReference type="EMDB" id="EMD-20954"/>
<dbReference type="EMDB" id="EMD-30907"/>
<dbReference type="EMDB" id="EMD-30908"/>
<dbReference type="EMDB" id="EMD-6856"/>
<dbReference type="SMR" id="Q9Y210"/>
<dbReference type="BioGRID" id="113076">
    <property type="interactions" value="78"/>
</dbReference>
<dbReference type="FunCoup" id="Q9Y210">
    <property type="interactions" value="201"/>
</dbReference>
<dbReference type="IntAct" id="Q9Y210">
    <property type="interactions" value="3"/>
</dbReference>
<dbReference type="STRING" id="9606.ENSP00000340913"/>
<dbReference type="BindingDB" id="Q9Y210"/>
<dbReference type="ChEMBL" id="CHEMBL2417347"/>
<dbReference type="DrugCentral" id="Q9Y210"/>
<dbReference type="GuidetoPHARMACOLOGY" id="491"/>
<dbReference type="TCDB" id="1.A.4.1.5">
    <property type="family name" value="the transient receptor potential ca2+/cation channel (trp-cc) family"/>
</dbReference>
<dbReference type="GlyConnect" id="2074">
    <property type="glycosylation" value="2 N-Linked glycans (1 site)"/>
</dbReference>
<dbReference type="GlyCosmos" id="Q9Y210">
    <property type="glycosylation" value="2 sites, 4 glycans"/>
</dbReference>
<dbReference type="GlyGen" id="Q9Y210">
    <property type="glycosylation" value="5 sites, 4 N-linked glycans (1 site), 1 O-linked glycan (3 sites)"/>
</dbReference>
<dbReference type="iPTMnet" id="Q9Y210"/>
<dbReference type="PhosphoSitePlus" id="Q9Y210"/>
<dbReference type="BioMuta" id="TRPC6"/>
<dbReference type="DMDM" id="6686048"/>
<dbReference type="jPOST" id="Q9Y210"/>
<dbReference type="MassIVE" id="Q9Y210"/>
<dbReference type="PaxDb" id="9606-ENSP00000340913"/>
<dbReference type="PeptideAtlas" id="Q9Y210"/>
<dbReference type="ProteomicsDB" id="85580">
    <molecule id="Q9Y210-1"/>
</dbReference>
<dbReference type="ProteomicsDB" id="85581">
    <molecule id="Q9Y210-2"/>
</dbReference>
<dbReference type="ProteomicsDB" id="85582">
    <molecule id="Q9Y210-3"/>
</dbReference>
<dbReference type="ABCD" id="Q9Y210">
    <property type="antibodies" value="1 sequenced antibody"/>
</dbReference>
<dbReference type="Antibodypedia" id="17956">
    <property type="antibodies" value="418 antibodies from 39 providers"/>
</dbReference>
<dbReference type="DNASU" id="7225"/>
<dbReference type="Ensembl" id="ENST00000344327.8">
    <molecule id="Q9Y210-1"/>
    <property type="protein sequence ID" value="ENSP00000340913.3"/>
    <property type="gene ID" value="ENSG00000137672.13"/>
</dbReference>
<dbReference type="Ensembl" id="ENST00000348423.8">
    <molecule id="Q9Y210-2"/>
    <property type="protein sequence ID" value="ENSP00000343672.4"/>
    <property type="gene ID" value="ENSG00000137672.13"/>
</dbReference>
<dbReference type="Ensembl" id="ENST00000360497.4">
    <molecule id="Q9Y210-3"/>
    <property type="protein sequence ID" value="ENSP00000353687.4"/>
    <property type="gene ID" value="ENSG00000137672.13"/>
</dbReference>
<dbReference type="GeneID" id="7225"/>
<dbReference type="KEGG" id="hsa:7225"/>
<dbReference type="MANE-Select" id="ENST00000344327.8">
    <property type="protein sequence ID" value="ENSP00000340913.3"/>
    <property type="RefSeq nucleotide sequence ID" value="NM_004621.6"/>
    <property type="RefSeq protein sequence ID" value="NP_004612.2"/>
</dbReference>
<dbReference type="UCSC" id="uc001pgk.4">
    <molecule id="Q9Y210-1"/>
    <property type="organism name" value="human"/>
</dbReference>
<dbReference type="AGR" id="HGNC:12338"/>
<dbReference type="CTD" id="7225"/>
<dbReference type="DisGeNET" id="7225"/>
<dbReference type="GeneCards" id="TRPC6"/>
<dbReference type="HGNC" id="HGNC:12338">
    <property type="gene designation" value="TRPC6"/>
</dbReference>
<dbReference type="HPA" id="ENSG00000137672">
    <property type="expression patterns" value="Tissue enhanced (lung, placenta)"/>
</dbReference>
<dbReference type="MalaCards" id="TRPC6"/>
<dbReference type="MIM" id="603652">
    <property type="type" value="gene"/>
</dbReference>
<dbReference type="MIM" id="603965">
    <property type="type" value="phenotype"/>
</dbReference>
<dbReference type="neXtProt" id="NX_Q9Y210"/>
<dbReference type="OpenTargets" id="ENSG00000137672"/>
<dbReference type="Orphanet" id="656">
    <property type="disease" value="Hereditary steroid-resistant nephrotic syndrome"/>
</dbReference>
<dbReference type="PharmGKB" id="PA37011"/>
<dbReference type="VEuPathDB" id="HostDB:ENSG00000137672"/>
<dbReference type="eggNOG" id="KOG3609">
    <property type="taxonomic scope" value="Eukaryota"/>
</dbReference>
<dbReference type="GeneTree" id="ENSGT01060000248588"/>
<dbReference type="InParanoid" id="Q9Y210"/>
<dbReference type="OMA" id="TWMELLI"/>
<dbReference type="OrthoDB" id="2373987at2759"/>
<dbReference type="PAN-GO" id="Q9Y210">
    <property type="GO annotations" value="8 GO annotations based on evolutionary models"/>
</dbReference>
<dbReference type="PhylomeDB" id="Q9Y210"/>
<dbReference type="TreeFam" id="TF313147"/>
<dbReference type="PathwayCommons" id="Q9Y210"/>
<dbReference type="Reactome" id="R-HSA-114508">
    <property type="pathway name" value="Effects of PIP2 hydrolysis"/>
</dbReference>
<dbReference type="Reactome" id="R-HSA-139853">
    <property type="pathway name" value="Elevation of cytosolic Ca2+ levels"/>
</dbReference>
<dbReference type="Reactome" id="R-HSA-3295583">
    <property type="pathway name" value="TRP channels"/>
</dbReference>
<dbReference type="Reactome" id="R-HSA-418890">
    <property type="pathway name" value="Role of second messengers in netrin-1 signaling"/>
</dbReference>
<dbReference type="SABIO-RK" id="Q9Y210"/>
<dbReference type="SignaLink" id="Q9Y210"/>
<dbReference type="SIGNOR" id="Q9Y210"/>
<dbReference type="BioGRID-ORCS" id="7225">
    <property type="hits" value="15 hits in 1141 CRISPR screens"/>
</dbReference>
<dbReference type="ChiTaRS" id="TRPC6">
    <property type="organism name" value="human"/>
</dbReference>
<dbReference type="GeneWiki" id="TRPC6"/>
<dbReference type="GenomeRNAi" id="7225"/>
<dbReference type="Pharos" id="Q9Y210">
    <property type="development level" value="Tchem"/>
</dbReference>
<dbReference type="PRO" id="PR:Q9Y210"/>
<dbReference type="Proteomes" id="UP000005640">
    <property type="component" value="Chromosome 11"/>
</dbReference>
<dbReference type="RNAct" id="Q9Y210">
    <property type="molecule type" value="protein"/>
</dbReference>
<dbReference type="Bgee" id="ENSG00000137672">
    <property type="expression patterns" value="Expressed in right lung and 110 other cell types or tissues"/>
</dbReference>
<dbReference type="ExpressionAtlas" id="Q9Y210">
    <property type="expression patterns" value="baseline and differential"/>
</dbReference>
<dbReference type="GO" id="GO:0034703">
    <property type="term" value="C:cation channel complex"/>
    <property type="evidence" value="ECO:0000318"/>
    <property type="project" value="GO_Central"/>
</dbReference>
<dbReference type="GO" id="GO:0005737">
    <property type="term" value="C:cytoplasm"/>
    <property type="evidence" value="ECO:0000314"/>
    <property type="project" value="UniProtKB"/>
</dbReference>
<dbReference type="GO" id="GO:0016020">
    <property type="term" value="C:membrane"/>
    <property type="evidence" value="ECO:0000314"/>
    <property type="project" value="UniProtKB"/>
</dbReference>
<dbReference type="GO" id="GO:0005886">
    <property type="term" value="C:plasma membrane"/>
    <property type="evidence" value="ECO:0000314"/>
    <property type="project" value="UniProtKB"/>
</dbReference>
<dbReference type="GO" id="GO:0036057">
    <property type="term" value="C:slit diaphragm"/>
    <property type="evidence" value="ECO:0007669"/>
    <property type="project" value="Ensembl"/>
</dbReference>
<dbReference type="GO" id="GO:0003779">
    <property type="term" value="F:actin binding"/>
    <property type="evidence" value="ECO:0007669"/>
    <property type="project" value="Ensembl"/>
</dbReference>
<dbReference type="GO" id="GO:0042805">
    <property type="term" value="F:actinin binding"/>
    <property type="evidence" value="ECO:0007669"/>
    <property type="project" value="Ensembl"/>
</dbReference>
<dbReference type="GO" id="GO:0051117">
    <property type="term" value="F:ATPase binding"/>
    <property type="evidence" value="ECO:0007669"/>
    <property type="project" value="Ensembl"/>
</dbReference>
<dbReference type="GO" id="GO:0005262">
    <property type="term" value="F:calcium channel activity"/>
    <property type="evidence" value="ECO:0000314"/>
    <property type="project" value="UniProtKB"/>
</dbReference>
<dbReference type="GO" id="GO:0030276">
    <property type="term" value="F:clathrin binding"/>
    <property type="evidence" value="ECO:0007669"/>
    <property type="project" value="Ensembl"/>
</dbReference>
<dbReference type="GO" id="GO:0070679">
    <property type="term" value="F:inositol 1,4,5 trisphosphate binding"/>
    <property type="evidence" value="ECO:0000314"/>
    <property type="project" value="BHF-UCL"/>
</dbReference>
<dbReference type="GO" id="GO:0005261">
    <property type="term" value="F:monoatomic cation channel activity"/>
    <property type="evidence" value="ECO:0000314"/>
    <property type="project" value="UniProtKB"/>
</dbReference>
<dbReference type="GO" id="GO:0042803">
    <property type="term" value="F:protein homodimerization activity"/>
    <property type="evidence" value="ECO:0000314"/>
    <property type="project" value="UniProtKB"/>
</dbReference>
<dbReference type="GO" id="GO:0015279">
    <property type="term" value="F:store-operated calcium channel activity"/>
    <property type="evidence" value="ECO:0000318"/>
    <property type="project" value="GO_Central"/>
</dbReference>
<dbReference type="GO" id="GO:0070588">
    <property type="term" value="P:calcium ion transmembrane transport"/>
    <property type="evidence" value="ECO:0000318"/>
    <property type="project" value="GO_Central"/>
</dbReference>
<dbReference type="GO" id="GO:0070301">
    <property type="term" value="P:cellular response to hydrogen peroxide"/>
    <property type="evidence" value="ECO:0007669"/>
    <property type="project" value="Ensembl"/>
</dbReference>
<dbReference type="GO" id="GO:0071456">
    <property type="term" value="P:cellular response to hypoxia"/>
    <property type="evidence" value="ECO:0007669"/>
    <property type="project" value="Ensembl"/>
</dbReference>
<dbReference type="GO" id="GO:0006812">
    <property type="term" value="P:monoatomic cation transport"/>
    <property type="evidence" value="ECO:0000304"/>
    <property type="project" value="ProtInc"/>
</dbReference>
<dbReference type="GO" id="GO:0050774">
    <property type="term" value="P:negative regulation of dendrite morphogenesis"/>
    <property type="evidence" value="ECO:0007669"/>
    <property type="project" value="Ensembl"/>
</dbReference>
<dbReference type="GO" id="GO:0030182">
    <property type="term" value="P:neuron differentiation"/>
    <property type="evidence" value="ECO:0007669"/>
    <property type="project" value="Ensembl"/>
</dbReference>
<dbReference type="GO" id="GO:0051928">
    <property type="term" value="P:positive regulation of calcium ion transport"/>
    <property type="evidence" value="ECO:0000314"/>
    <property type="project" value="MGI"/>
</dbReference>
<dbReference type="GO" id="GO:0007204">
    <property type="term" value="P:positive regulation of cytosolic calcium ion concentration"/>
    <property type="evidence" value="ECO:0007669"/>
    <property type="project" value="Ensembl"/>
</dbReference>
<dbReference type="GO" id="GO:0032414">
    <property type="term" value="P:positive regulation of ion transmembrane transporter activity"/>
    <property type="evidence" value="ECO:0000314"/>
    <property type="project" value="MGI"/>
</dbReference>
<dbReference type="GO" id="GO:0045666">
    <property type="term" value="P:positive regulation of neuron differentiation"/>
    <property type="evidence" value="ECO:0007669"/>
    <property type="project" value="Ensembl"/>
</dbReference>
<dbReference type="GO" id="GO:0051480">
    <property type="term" value="P:regulation of cytosolic calcium ion concentration"/>
    <property type="evidence" value="ECO:0000318"/>
    <property type="project" value="GO_Central"/>
</dbReference>
<dbReference type="GO" id="GO:0007338">
    <property type="term" value="P:single fertilization"/>
    <property type="evidence" value="ECO:0000318"/>
    <property type="project" value="GO_Central"/>
</dbReference>
<dbReference type="FunFam" id="1.25.40.20:FF:000157">
    <property type="entry name" value="short transient receptor potential channel 6 isoform X1"/>
    <property type="match status" value="1"/>
</dbReference>
<dbReference type="FunFam" id="1.10.287.70:FF:000041">
    <property type="entry name" value="Transient receptor potential cation channel subfamily C member 7"/>
    <property type="match status" value="1"/>
</dbReference>
<dbReference type="Gene3D" id="1.10.287.70">
    <property type="match status" value="1"/>
</dbReference>
<dbReference type="Gene3D" id="1.25.40.20">
    <property type="entry name" value="Ankyrin repeat-containing domain"/>
    <property type="match status" value="1"/>
</dbReference>
<dbReference type="InterPro" id="IPR002110">
    <property type="entry name" value="Ankyrin_rpt"/>
</dbReference>
<dbReference type="InterPro" id="IPR036770">
    <property type="entry name" value="Ankyrin_rpt-contain_sf"/>
</dbReference>
<dbReference type="InterPro" id="IPR005821">
    <property type="entry name" value="Ion_trans_dom"/>
</dbReference>
<dbReference type="InterPro" id="IPR013555">
    <property type="entry name" value="TRP_dom"/>
</dbReference>
<dbReference type="InterPro" id="IPR005462">
    <property type="entry name" value="TRPC6_channel"/>
</dbReference>
<dbReference type="InterPro" id="IPR002153">
    <property type="entry name" value="TRPC_channel"/>
</dbReference>
<dbReference type="NCBIfam" id="TIGR00870">
    <property type="entry name" value="trp"/>
    <property type="match status" value="1"/>
</dbReference>
<dbReference type="PANTHER" id="PTHR10117:SF7">
    <property type="entry name" value="SHORT TRANSIENT RECEPTOR POTENTIAL CHANNEL 6"/>
    <property type="match status" value="1"/>
</dbReference>
<dbReference type="PANTHER" id="PTHR10117">
    <property type="entry name" value="TRANSIENT RECEPTOR POTENTIAL CHANNEL"/>
    <property type="match status" value="1"/>
</dbReference>
<dbReference type="Pfam" id="PF12796">
    <property type="entry name" value="Ank_2"/>
    <property type="match status" value="1"/>
</dbReference>
<dbReference type="Pfam" id="PF00520">
    <property type="entry name" value="Ion_trans"/>
    <property type="match status" value="1"/>
</dbReference>
<dbReference type="Pfam" id="PF08344">
    <property type="entry name" value="TRP_2"/>
    <property type="match status" value="1"/>
</dbReference>
<dbReference type="PRINTS" id="PR01097">
    <property type="entry name" value="TRNSRECEPTRP"/>
</dbReference>
<dbReference type="PRINTS" id="PR01647">
    <property type="entry name" value="TRPCHANNEL6"/>
</dbReference>
<dbReference type="SMART" id="SM00248">
    <property type="entry name" value="ANK"/>
    <property type="match status" value="3"/>
</dbReference>
<dbReference type="SMART" id="SM01420">
    <property type="entry name" value="TRP_2"/>
    <property type="match status" value="1"/>
</dbReference>
<dbReference type="SUPFAM" id="SSF48403">
    <property type="entry name" value="Ankyrin repeat"/>
    <property type="match status" value="1"/>
</dbReference>
<dbReference type="PROSITE" id="PS50297">
    <property type="entry name" value="ANK_REP_REGION"/>
    <property type="match status" value="2"/>
</dbReference>
<dbReference type="PROSITE" id="PS50088">
    <property type="entry name" value="ANK_REPEAT"/>
    <property type="match status" value="1"/>
</dbReference>